<organism>
    <name type="scientific">Arabidopsis thaliana</name>
    <name type="common">Mouse-ear cress</name>
    <dbReference type="NCBI Taxonomy" id="3702"/>
    <lineage>
        <taxon>Eukaryota</taxon>
        <taxon>Viridiplantae</taxon>
        <taxon>Streptophyta</taxon>
        <taxon>Embryophyta</taxon>
        <taxon>Tracheophyta</taxon>
        <taxon>Spermatophyta</taxon>
        <taxon>Magnoliopsida</taxon>
        <taxon>eudicotyledons</taxon>
        <taxon>Gunneridae</taxon>
        <taxon>Pentapetalae</taxon>
        <taxon>rosids</taxon>
        <taxon>malvids</taxon>
        <taxon>Brassicales</taxon>
        <taxon>Brassicaceae</taxon>
        <taxon>Camelineae</taxon>
        <taxon>Arabidopsis</taxon>
    </lineage>
</organism>
<reference key="1">
    <citation type="journal article" date="2000" name="Nature">
        <title>Sequence and analysis of chromosome 5 of the plant Arabidopsis thaliana.</title>
        <authorList>
            <person name="Tabata S."/>
            <person name="Kaneko T."/>
            <person name="Nakamura Y."/>
            <person name="Kotani H."/>
            <person name="Kato T."/>
            <person name="Asamizu E."/>
            <person name="Miyajima N."/>
            <person name="Sasamoto S."/>
            <person name="Kimura T."/>
            <person name="Hosouchi T."/>
            <person name="Kawashima K."/>
            <person name="Kohara M."/>
            <person name="Matsumoto M."/>
            <person name="Matsuno A."/>
            <person name="Muraki A."/>
            <person name="Nakayama S."/>
            <person name="Nakazaki N."/>
            <person name="Naruo K."/>
            <person name="Okumura S."/>
            <person name="Shinpo S."/>
            <person name="Takeuchi C."/>
            <person name="Wada T."/>
            <person name="Watanabe A."/>
            <person name="Yamada M."/>
            <person name="Yasuda M."/>
            <person name="Sato S."/>
            <person name="de la Bastide M."/>
            <person name="Huang E."/>
            <person name="Spiegel L."/>
            <person name="Gnoj L."/>
            <person name="O'Shaughnessy A."/>
            <person name="Preston R."/>
            <person name="Habermann K."/>
            <person name="Murray J."/>
            <person name="Johnson D."/>
            <person name="Rohlfing T."/>
            <person name="Nelson J."/>
            <person name="Stoneking T."/>
            <person name="Pepin K."/>
            <person name="Spieth J."/>
            <person name="Sekhon M."/>
            <person name="Armstrong J."/>
            <person name="Becker M."/>
            <person name="Belter E."/>
            <person name="Cordum H."/>
            <person name="Cordes M."/>
            <person name="Courtney L."/>
            <person name="Courtney W."/>
            <person name="Dante M."/>
            <person name="Du H."/>
            <person name="Edwards J."/>
            <person name="Fryman J."/>
            <person name="Haakensen B."/>
            <person name="Lamar E."/>
            <person name="Latreille P."/>
            <person name="Leonard S."/>
            <person name="Meyer R."/>
            <person name="Mulvaney E."/>
            <person name="Ozersky P."/>
            <person name="Riley A."/>
            <person name="Strowmatt C."/>
            <person name="Wagner-McPherson C."/>
            <person name="Wollam A."/>
            <person name="Yoakum M."/>
            <person name="Bell M."/>
            <person name="Dedhia N."/>
            <person name="Parnell L."/>
            <person name="Shah R."/>
            <person name="Rodriguez M."/>
            <person name="Hoon See L."/>
            <person name="Vil D."/>
            <person name="Baker J."/>
            <person name="Kirchoff K."/>
            <person name="Toth K."/>
            <person name="King L."/>
            <person name="Bahret A."/>
            <person name="Miller B."/>
            <person name="Marra M.A."/>
            <person name="Martienssen R."/>
            <person name="McCombie W.R."/>
            <person name="Wilson R.K."/>
            <person name="Murphy G."/>
            <person name="Bancroft I."/>
            <person name="Volckaert G."/>
            <person name="Wambutt R."/>
            <person name="Duesterhoeft A."/>
            <person name="Stiekema W."/>
            <person name="Pohl T."/>
            <person name="Entian K.-D."/>
            <person name="Terryn N."/>
            <person name="Hartley N."/>
            <person name="Bent E."/>
            <person name="Johnson S."/>
            <person name="Langham S.-A."/>
            <person name="McCullagh B."/>
            <person name="Robben J."/>
            <person name="Grymonprez B."/>
            <person name="Zimmermann W."/>
            <person name="Ramsperger U."/>
            <person name="Wedler H."/>
            <person name="Balke K."/>
            <person name="Wedler E."/>
            <person name="Peters S."/>
            <person name="van Staveren M."/>
            <person name="Dirkse W."/>
            <person name="Mooijman P."/>
            <person name="Klein Lankhorst R."/>
            <person name="Weitzenegger T."/>
            <person name="Bothe G."/>
            <person name="Rose M."/>
            <person name="Hauf J."/>
            <person name="Berneiser S."/>
            <person name="Hempel S."/>
            <person name="Feldpausch M."/>
            <person name="Lamberth S."/>
            <person name="Villarroel R."/>
            <person name="Gielen J."/>
            <person name="Ardiles W."/>
            <person name="Bents O."/>
            <person name="Lemcke K."/>
            <person name="Kolesov G."/>
            <person name="Mayer K.F.X."/>
            <person name="Rudd S."/>
            <person name="Schoof H."/>
            <person name="Schueller C."/>
            <person name="Zaccaria P."/>
            <person name="Mewes H.-W."/>
            <person name="Bevan M."/>
            <person name="Fransz P.F."/>
        </authorList>
    </citation>
    <scope>NUCLEOTIDE SEQUENCE [LARGE SCALE GENOMIC DNA]</scope>
    <source>
        <strain>cv. Columbia</strain>
    </source>
</reference>
<reference key="2">
    <citation type="journal article" date="2017" name="Plant J.">
        <title>Araport11: a complete reannotation of the Arabidopsis thaliana reference genome.</title>
        <authorList>
            <person name="Cheng C.Y."/>
            <person name="Krishnakumar V."/>
            <person name="Chan A.P."/>
            <person name="Thibaud-Nissen F."/>
            <person name="Schobel S."/>
            <person name="Town C.D."/>
        </authorList>
    </citation>
    <scope>GENOME REANNOTATION</scope>
    <source>
        <strain>cv. Columbia</strain>
    </source>
</reference>
<reference key="3">
    <citation type="journal article" date="2003" name="Science">
        <title>Empirical analysis of transcriptional activity in the Arabidopsis genome.</title>
        <authorList>
            <person name="Yamada K."/>
            <person name="Lim J."/>
            <person name="Dale J.M."/>
            <person name="Chen H."/>
            <person name="Shinn P."/>
            <person name="Palm C.J."/>
            <person name="Southwick A.M."/>
            <person name="Wu H.C."/>
            <person name="Kim C.J."/>
            <person name="Nguyen M."/>
            <person name="Pham P.K."/>
            <person name="Cheuk R.F."/>
            <person name="Karlin-Newmann G."/>
            <person name="Liu S.X."/>
            <person name="Lam B."/>
            <person name="Sakano H."/>
            <person name="Wu T."/>
            <person name="Yu G."/>
            <person name="Miranda M."/>
            <person name="Quach H.L."/>
            <person name="Tripp M."/>
            <person name="Chang C.H."/>
            <person name="Lee J.M."/>
            <person name="Toriumi M.J."/>
            <person name="Chan M.M."/>
            <person name="Tang C.C."/>
            <person name="Onodera C.S."/>
            <person name="Deng J.M."/>
            <person name="Akiyama K."/>
            <person name="Ansari Y."/>
            <person name="Arakawa T."/>
            <person name="Banh J."/>
            <person name="Banno F."/>
            <person name="Bowser L."/>
            <person name="Brooks S.Y."/>
            <person name="Carninci P."/>
            <person name="Chao Q."/>
            <person name="Choy N."/>
            <person name="Enju A."/>
            <person name="Goldsmith A.D."/>
            <person name="Gurjal M."/>
            <person name="Hansen N.F."/>
            <person name="Hayashizaki Y."/>
            <person name="Johnson-Hopson C."/>
            <person name="Hsuan V.W."/>
            <person name="Iida K."/>
            <person name="Karnes M."/>
            <person name="Khan S."/>
            <person name="Koesema E."/>
            <person name="Ishida J."/>
            <person name="Jiang P.X."/>
            <person name="Jones T."/>
            <person name="Kawai J."/>
            <person name="Kamiya A."/>
            <person name="Meyers C."/>
            <person name="Nakajima M."/>
            <person name="Narusaka M."/>
            <person name="Seki M."/>
            <person name="Sakurai T."/>
            <person name="Satou M."/>
            <person name="Tamse R."/>
            <person name="Vaysberg M."/>
            <person name="Wallender E.K."/>
            <person name="Wong C."/>
            <person name="Yamamura Y."/>
            <person name="Yuan S."/>
            <person name="Shinozaki K."/>
            <person name="Davis R.W."/>
            <person name="Theologis A."/>
            <person name="Ecker J.R."/>
        </authorList>
    </citation>
    <scope>NUCLEOTIDE SEQUENCE [LARGE SCALE MRNA]</scope>
    <source>
        <strain>cv. Columbia</strain>
    </source>
</reference>
<reference key="4">
    <citation type="journal article" date="2009" name="DNA Res.">
        <title>Analysis of multiple occurrences of alternative splicing events in Arabidopsis thaliana using novel sequenced full-length cDNAs.</title>
        <authorList>
            <person name="Iida K."/>
            <person name="Fukami-Kobayashi K."/>
            <person name="Toyoda A."/>
            <person name="Sakaki Y."/>
            <person name="Kobayashi M."/>
            <person name="Seki M."/>
            <person name="Shinozaki K."/>
        </authorList>
    </citation>
    <scope>NUCLEOTIDE SEQUENCE [LARGE SCALE MRNA]</scope>
    <source>
        <strain>cv. Columbia</strain>
        <tissue>Rosette leaf</tissue>
    </source>
</reference>
<reference key="5">
    <citation type="journal article" date="2005" name="Mol. Genet. Genomics">
        <title>Four distinct classes of proteins as interaction partners of the PABC domain of Arabidopsis thaliana Poly(A)-binding proteins.</title>
        <authorList>
            <person name="Bravo J."/>
            <person name="Aguilar-Henonin L."/>
            <person name="Olmedo G."/>
            <person name="Guzman P."/>
        </authorList>
    </citation>
    <scope>GENE FAMILY</scope>
    <scope>PAM2 MOTIF</scope>
</reference>
<keyword id="KW-1185">Reference proteome</keyword>
<evidence type="ECO:0000255" key="1">
    <source>
        <dbReference type="PROSITE-ProRule" id="PRU00468"/>
    </source>
</evidence>
<evidence type="ECO:0000256" key="2">
    <source>
        <dbReference type="SAM" id="MobiDB-lite"/>
    </source>
</evidence>
<dbReference type="EMBL" id="AC006601">
    <property type="status" value="NOT_ANNOTATED_CDS"/>
    <property type="molecule type" value="Genomic_DNA"/>
</dbReference>
<dbReference type="EMBL" id="CP002688">
    <property type="protein sequence ID" value="AED93460.1"/>
    <property type="molecule type" value="Genomic_DNA"/>
</dbReference>
<dbReference type="EMBL" id="CP002688">
    <property type="protein sequence ID" value="ANM69448.1"/>
    <property type="molecule type" value="Genomic_DNA"/>
</dbReference>
<dbReference type="EMBL" id="BT010477">
    <property type="protein sequence ID" value="AAQ65100.1"/>
    <property type="molecule type" value="mRNA"/>
</dbReference>
<dbReference type="EMBL" id="AK316708">
    <property type="protein sequence ID" value="BAH19435.1"/>
    <property type="molecule type" value="mRNA"/>
</dbReference>
<dbReference type="RefSeq" id="NP_001331123.1">
    <property type="nucleotide sequence ID" value="NM_001343938.1"/>
</dbReference>
<dbReference type="RefSeq" id="NP_197936.1">
    <property type="nucleotide sequence ID" value="NM_122465.4"/>
</dbReference>
<dbReference type="SMR" id="Q6NQH9"/>
<dbReference type="FunCoup" id="Q6NQH9">
    <property type="interactions" value="1231"/>
</dbReference>
<dbReference type="STRING" id="3702.Q6NQH9"/>
<dbReference type="iPTMnet" id="Q6NQH9"/>
<dbReference type="PaxDb" id="3702-AT5G25540.1"/>
<dbReference type="ProteomicsDB" id="246908"/>
<dbReference type="EnsemblPlants" id="AT5G25540.1">
    <property type="protein sequence ID" value="AT5G25540.1"/>
    <property type="gene ID" value="AT5G25540"/>
</dbReference>
<dbReference type="EnsemblPlants" id="AT5G25540.3">
    <property type="protein sequence ID" value="AT5G25540.3"/>
    <property type="gene ID" value="AT5G25540"/>
</dbReference>
<dbReference type="GeneID" id="832629"/>
<dbReference type="Gramene" id="AT5G25540.1">
    <property type="protein sequence ID" value="AT5G25540.1"/>
    <property type="gene ID" value="AT5G25540"/>
</dbReference>
<dbReference type="Gramene" id="AT5G25540.3">
    <property type="protein sequence ID" value="AT5G25540.3"/>
    <property type="gene ID" value="AT5G25540"/>
</dbReference>
<dbReference type="KEGG" id="ath:AT5G25540"/>
<dbReference type="Araport" id="AT5G25540"/>
<dbReference type="TAIR" id="AT5G25540">
    <property type="gene designation" value="CID6"/>
</dbReference>
<dbReference type="eggNOG" id="ENOG502S2Y2">
    <property type="taxonomic scope" value="Eukaryota"/>
</dbReference>
<dbReference type="HOGENOM" id="CLU_123587_0_0_1"/>
<dbReference type="InParanoid" id="Q6NQH9"/>
<dbReference type="OMA" id="NIKHPEA"/>
<dbReference type="OrthoDB" id="769720at2759"/>
<dbReference type="PhylomeDB" id="Q6NQH9"/>
<dbReference type="CD-CODE" id="4299E36E">
    <property type="entry name" value="Nucleolus"/>
</dbReference>
<dbReference type="PRO" id="PR:Q6NQH9"/>
<dbReference type="Proteomes" id="UP000006548">
    <property type="component" value="Chromosome 5"/>
</dbReference>
<dbReference type="ExpressionAtlas" id="Q6NQH9">
    <property type="expression patterns" value="baseline and differential"/>
</dbReference>
<dbReference type="GO" id="GO:0043130">
    <property type="term" value="F:ubiquitin binding"/>
    <property type="evidence" value="ECO:0007669"/>
    <property type="project" value="InterPro"/>
</dbReference>
<dbReference type="CDD" id="cd14371">
    <property type="entry name" value="CUE_CID7_like"/>
    <property type="match status" value="1"/>
</dbReference>
<dbReference type="Gene3D" id="1.10.8.10">
    <property type="entry name" value="DNA helicase RuvA subunit, C-terminal domain"/>
    <property type="match status" value="1"/>
</dbReference>
<dbReference type="InterPro" id="IPR041806">
    <property type="entry name" value="CID5/6/7_CUE"/>
</dbReference>
<dbReference type="InterPro" id="IPR038981">
    <property type="entry name" value="CID5/CID6"/>
</dbReference>
<dbReference type="InterPro" id="IPR003892">
    <property type="entry name" value="CUE"/>
</dbReference>
<dbReference type="PANTHER" id="PTHR37252">
    <property type="entry name" value="POLYADENYLATE-BINDING PROTEIN-INTERACTING PROTEIN 6"/>
    <property type="match status" value="1"/>
</dbReference>
<dbReference type="PANTHER" id="PTHR37252:SF3">
    <property type="entry name" value="POLYADENYLATE-BINDING PROTEIN-INTERACTING PROTEIN 6"/>
    <property type="match status" value="1"/>
</dbReference>
<dbReference type="PROSITE" id="PS51140">
    <property type="entry name" value="CUE"/>
    <property type="match status" value="1"/>
</dbReference>
<protein>
    <recommendedName>
        <fullName>Polyadenylate-binding protein-interacting protein 6</fullName>
        <shortName>PABP-interacting protein 6</shortName>
        <shortName>Poly(A)-binding protein-interacting protein 6</shortName>
    </recommendedName>
    <alternativeName>
        <fullName>PAM2-containing protein CID6</fullName>
    </alternativeName>
    <alternativeName>
        <fullName>Protein CTC-INTERACTING DOMAIN 6</fullName>
    </alternativeName>
</protein>
<comment type="domain">
    <text>Contains a PAM2-like motif, which seems to be involved in the binding to the PABC/CTC domain of PAB proteins.</text>
</comment>
<proteinExistence type="evidence at transcript level"/>
<name>CID6_ARATH</name>
<feature type="chain" id="PRO_0000428897" description="Polyadenylate-binding protein-interacting protein 6">
    <location>
        <begin position="1"/>
        <end position="175"/>
    </location>
</feature>
<feature type="domain" description="CUE" evidence="1">
    <location>
        <begin position="83"/>
        <end position="126"/>
    </location>
</feature>
<feature type="region of interest" description="Disordered" evidence="2">
    <location>
        <begin position="145"/>
        <end position="175"/>
    </location>
</feature>
<feature type="short sequence motif" description="PAM2-like">
    <location>
        <begin position="7"/>
        <end position="17"/>
    </location>
</feature>
<feature type="compositionally biased region" description="Polar residues" evidence="2">
    <location>
        <begin position="166"/>
        <end position="175"/>
    </location>
</feature>
<accession>Q6NQH9</accession>
<sequence length="175" mass="19347">MKSGSSTLNPYAAAYVPLSKREGSLVDTKPVTQQHMQQQHHQQQPYYGYGVQGMGSYQGTQMSPKKSPSEMVYNHQLKDEDLEMDMDIEYLLATYPGLSQESINDVYLANTCDLDATIEMLNQLEIYSTEAEEYLPDTLDIGDVPEIITESSKQKNDGSSASSSSGIRNANVSSS</sequence>
<gene>
    <name type="primary">CID6</name>
    <name type="synonym">IPH1</name>
    <name type="ordered locus">At5g25540</name>
    <name type="ORF">T14C9.80</name>
</gene>